<dbReference type="EC" id="4.4.1.21" evidence="1"/>
<dbReference type="EMBL" id="AE015924">
    <property type="protein sequence ID" value="AAQ65692.1"/>
    <property type="molecule type" value="Genomic_DNA"/>
</dbReference>
<dbReference type="RefSeq" id="WP_010956044.1">
    <property type="nucleotide sequence ID" value="NC_002950.2"/>
</dbReference>
<dbReference type="SMR" id="Q7MWT9"/>
<dbReference type="STRING" id="242619.PG_0498"/>
<dbReference type="EnsemblBacteria" id="AAQ65692">
    <property type="protein sequence ID" value="AAQ65692"/>
    <property type="gene ID" value="PG_0498"/>
</dbReference>
<dbReference type="KEGG" id="pgi:PG_0498"/>
<dbReference type="eggNOG" id="COG1854">
    <property type="taxonomic scope" value="Bacteria"/>
</dbReference>
<dbReference type="HOGENOM" id="CLU_107531_1_0_10"/>
<dbReference type="BioCyc" id="MetaCyc:MONOMER-14563"/>
<dbReference type="Proteomes" id="UP000000588">
    <property type="component" value="Chromosome"/>
</dbReference>
<dbReference type="GO" id="GO:0005506">
    <property type="term" value="F:iron ion binding"/>
    <property type="evidence" value="ECO:0007669"/>
    <property type="project" value="InterPro"/>
</dbReference>
<dbReference type="GO" id="GO:0043768">
    <property type="term" value="F:S-ribosylhomocysteine lyase activity"/>
    <property type="evidence" value="ECO:0007669"/>
    <property type="project" value="UniProtKB-UniRule"/>
</dbReference>
<dbReference type="GO" id="GO:0009372">
    <property type="term" value="P:quorum sensing"/>
    <property type="evidence" value="ECO:0007669"/>
    <property type="project" value="UniProtKB-UniRule"/>
</dbReference>
<dbReference type="Gene3D" id="3.30.1360.80">
    <property type="entry name" value="S-ribosylhomocysteinase (LuxS)"/>
    <property type="match status" value="1"/>
</dbReference>
<dbReference type="HAMAP" id="MF_00091">
    <property type="entry name" value="LuxS"/>
    <property type="match status" value="1"/>
</dbReference>
<dbReference type="InterPro" id="IPR037005">
    <property type="entry name" value="LuxS_sf"/>
</dbReference>
<dbReference type="InterPro" id="IPR011249">
    <property type="entry name" value="Metalloenz_LuxS/M16"/>
</dbReference>
<dbReference type="InterPro" id="IPR003815">
    <property type="entry name" value="S-ribosylhomocysteinase"/>
</dbReference>
<dbReference type="NCBIfam" id="NF002604">
    <property type="entry name" value="PRK02260.1-4"/>
    <property type="match status" value="1"/>
</dbReference>
<dbReference type="PANTHER" id="PTHR35799">
    <property type="entry name" value="S-RIBOSYLHOMOCYSTEINE LYASE"/>
    <property type="match status" value="1"/>
</dbReference>
<dbReference type="PANTHER" id="PTHR35799:SF1">
    <property type="entry name" value="S-RIBOSYLHOMOCYSTEINE LYASE"/>
    <property type="match status" value="1"/>
</dbReference>
<dbReference type="Pfam" id="PF02664">
    <property type="entry name" value="LuxS"/>
    <property type="match status" value="1"/>
</dbReference>
<dbReference type="PIRSF" id="PIRSF006160">
    <property type="entry name" value="AI2"/>
    <property type="match status" value="1"/>
</dbReference>
<dbReference type="PRINTS" id="PR01487">
    <property type="entry name" value="LUXSPROTEIN"/>
</dbReference>
<dbReference type="SUPFAM" id="SSF63411">
    <property type="entry name" value="LuxS/MPP-like metallohydrolase"/>
    <property type="match status" value="1"/>
</dbReference>
<evidence type="ECO:0000255" key="1">
    <source>
        <dbReference type="HAMAP-Rule" id="MF_00091"/>
    </source>
</evidence>
<sequence length="159" mass="18554">MEKIPSFQLDHIRLKRGIYVSRKDYIGGEVVTTFDIRMKEPNREPVLGAPELHTIEHLAATYLRNHPLYKDRIVFWGPMGCLTGNYFLMRGDYVSKDILPLMQETFRFIRDFEGEVPGTEPRDCGNCLLHNLPMAKYEAEKYLREVLDVATEENLNYPD</sequence>
<comment type="function">
    <text evidence="1">Involved in the synthesis of autoinducer 2 (AI-2) which is secreted by bacteria and is used to communicate both the cell density and the metabolic potential of the environment. The regulation of gene expression in response to changes in cell density is called quorum sensing. Catalyzes the transformation of S-ribosylhomocysteine (RHC) to homocysteine (HC) and 4,5-dihydroxy-2,3-pentadione (DPD).</text>
</comment>
<comment type="catalytic activity">
    <reaction evidence="1">
        <text>S-(5-deoxy-D-ribos-5-yl)-L-homocysteine = (S)-4,5-dihydroxypentane-2,3-dione + L-homocysteine</text>
        <dbReference type="Rhea" id="RHEA:17753"/>
        <dbReference type="ChEBI" id="CHEBI:29484"/>
        <dbReference type="ChEBI" id="CHEBI:58195"/>
        <dbReference type="ChEBI" id="CHEBI:58199"/>
        <dbReference type="EC" id="4.4.1.21"/>
    </reaction>
</comment>
<comment type="cofactor">
    <cofactor evidence="1">
        <name>Fe cation</name>
        <dbReference type="ChEBI" id="CHEBI:24875"/>
    </cofactor>
    <text evidence="1">Binds 1 Fe cation per subunit.</text>
</comment>
<comment type="subunit">
    <text evidence="1">Homodimer.</text>
</comment>
<comment type="similarity">
    <text evidence="1">Belongs to the LuxS family.</text>
</comment>
<accession>Q7MWT9</accession>
<gene>
    <name evidence="1" type="primary">luxS</name>
    <name type="ordered locus">PG_0498</name>
</gene>
<keyword id="KW-0071">Autoinducer synthesis</keyword>
<keyword id="KW-0408">Iron</keyword>
<keyword id="KW-0456">Lyase</keyword>
<keyword id="KW-0479">Metal-binding</keyword>
<keyword id="KW-0673">Quorum sensing</keyword>
<keyword id="KW-1185">Reference proteome</keyword>
<organism>
    <name type="scientific">Porphyromonas gingivalis (strain ATCC BAA-308 / W83)</name>
    <dbReference type="NCBI Taxonomy" id="242619"/>
    <lineage>
        <taxon>Bacteria</taxon>
        <taxon>Pseudomonadati</taxon>
        <taxon>Bacteroidota</taxon>
        <taxon>Bacteroidia</taxon>
        <taxon>Bacteroidales</taxon>
        <taxon>Porphyromonadaceae</taxon>
        <taxon>Porphyromonas</taxon>
    </lineage>
</organism>
<protein>
    <recommendedName>
        <fullName evidence="1">S-ribosylhomocysteine lyase</fullName>
        <ecNumber evidence="1">4.4.1.21</ecNumber>
    </recommendedName>
    <alternativeName>
        <fullName evidence="1">AI-2 synthesis protein</fullName>
    </alternativeName>
    <alternativeName>
        <fullName evidence="1">Autoinducer-2 production protein LuxS</fullName>
    </alternativeName>
</protein>
<reference key="1">
    <citation type="journal article" date="2003" name="J. Bacteriol.">
        <title>Complete genome sequence of the oral pathogenic bacterium Porphyromonas gingivalis strain W83.</title>
        <authorList>
            <person name="Nelson K.E."/>
            <person name="Fleischmann R.D."/>
            <person name="DeBoy R.T."/>
            <person name="Paulsen I.T."/>
            <person name="Fouts D.E."/>
            <person name="Eisen J.A."/>
            <person name="Daugherty S.C."/>
            <person name="Dodson R.J."/>
            <person name="Durkin A.S."/>
            <person name="Gwinn M.L."/>
            <person name="Haft D.H."/>
            <person name="Kolonay J.F."/>
            <person name="Nelson W.C."/>
            <person name="Mason T.M."/>
            <person name="Tallon L."/>
            <person name="Gray J."/>
            <person name="Granger D."/>
            <person name="Tettelin H."/>
            <person name="Dong H."/>
            <person name="Galvin J.L."/>
            <person name="Duncan M.J."/>
            <person name="Dewhirst F.E."/>
            <person name="Fraser C.M."/>
        </authorList>
    </citation>
    <scope>NUCLEOTIDE SEQUENCE [LARGE SCALE GENOMIC DNA]</scope>
    <source>
        <strain>ATCC BAA-308 / W83</strain>
    </source>
</reference>
<feature type="chain" id="PRO_0000298019" description="S-ribosylhomocysteine lyase">
    <location>
        <begin position="1"/>
        <end position="159"/>
    </location>
</feature>
<feature type="binding site" evidence="1">
    <location>
        <position position="53"/>
    </location>
    <ligand>
        <name>Fe cation</name>
        <dbReference type="ChEBI" id="CHEBI:24875"/>
    </ligand>
</feature>
<feature type="binding site" evidence="1">
    <location>
        <position position="57"/>
    </location>
    <ligand>
        <name>Fe cation</name>
        <dbReference type="ChEBI" id="CHEBI:24875"/>
    </ligand>
</feature>
<feature type="binding site" evidence="1">
    <location>
        <position position="124"/>
    </location>
    <ligand>
        <name>Fe cation</name>
        <dbReference type="ChEBI" id="CHEBI:24875"/>
    </ligand>
</feature>
<proteinExistence type="inferred from homology"/>
<name>LUXS_PORGI</name>